<accession>Q9VZX9</accession>
<accession>Q6NR07</accession>
<evidence type="ECO:0000250" key="1">
    <source>
        <dbReference type="UniProtKB" id="P10760"/>
    </source>
</evidence>
<evidence type="ECO:0000255" key="2">
    <source>
        <dbReference type="RuleBase" id="RU000548"/>
    </source>
</evidence>
<evidence type="ECO:0000255" key="3">
    <source>
        <dbReference type="RuleBase" id="RU004166"/>
    </source>
</evidence>
<evidence type="ECO:0000256" key="4">
    <source>
        <dbReference type="SAM" id="MobiDB-lite"/>
    </source>
</evidence>
<evidence type="ECO:0000269" key="5">
    <source>
    </source>
</evidence>
<evidence type="ECO:0000303" key="6">
    <source>
    </source>
</evidence>
<evidence type="ECO:0000305" key="7"/>
<evidence type="ECO:0000312" key="8">
    <source>
        <dbReference type="EMBL" id="AAQ23595.1"/>
    </source>
</evidence>
<evidence type="ECO:0000312" key="9">
    <source>
        <dbReference type="EMBL" id="ACM16691.1"/>
    </source>
</evidence>
<evidence type="ECO:0000312" key="10">
    <source>
        <dbReference type="FlyBase" id="FBgn0035371"/>
    </source>
</evidence>
<evidence type="ECO:0000312" key="11">
    <source>
        <dbReference type="Proteomes" id="UP000000803"/>
    </source>
</evidence>
<gene>
    <name evidence="6 10" type="primary">AhcyL1</name>
    <name evidence="10" type="ORF">CG9977</name>
</gene>
<comment type="function">
    <text evidence="5">Might play a role in the regulation of methionine metabolism possibly by binding and inactivating Ahcy.</text>
</comment>
<comment type="cofactor">
    <cofactor evidence="2">
        <name>NAD(+)</name>
        <dbReference type="ChEBI" id="CHEBI:57540"/>
    </cofactor>
    <text evidence="2">Binds 1 NAD(+) per subunit.</text>
</comment>
<comment type="subunit">
    <text evidence="5">Interacts with Ahcy; the interaction may negatively regulate Ahcy catalytic activity.</text>
</comment>
<comment type="disruption phenotype">
    <text evidence="5">RNAi-mediated knockdown results in extended lifespan with increased fecundity and suppression of age-related decreased climbing activity and intestinal integrity (PubMed:27313316). Does not affect oxidative stress resistance (PubMed:27313316). Decreases levels of S-adenosyl-homocysteine and homocysteine (PubMed:27313316). Suppresses histone H3K4 trimethylation (PubMed:27313316). RNAi-mediated knockdown in neurons results in extended life span (PubMed:27313316). RNAi-mediated knockdown in the fat body does not show any phenotype (PubMed:27313316). Simultaneous knockdown of AhcyL2 in intestine results in extended life span (PubMed:27313316).</text>
</comment>
<comment type="similarity">
    <text evidence="3">Belongs to the adenosylhomocysteinase family.</text>
</comment>
<comment type="caution">
    <text evidence="7">Although it belongs to the adenosylhomocysteinase family, recombinant mouse homolog AHCYL1 expressed in bacteria shows no hydrolase activity, suggesting that Drosophila AhcyL1 may also lack this activity.</text>
</comment>
<proteinExistence type="evidence at protein level"/>
<sequence length="521" mass="56978">MNNLADTVVVDPGFGGGDKQQQAGPAPQDASVVVPPPATKQSSALKKTSRYRSRSLSASSTDSFSSASYTGSSEDGDDVPPREKVQKNSKGSSDFCVRNIGAQHAFGRREIEIAEQEMPGIIALKKRAAEDKPLKDAKIVGCTHINAQTAVLIETLVELGASVRWAACNIYSTQNEVAAALAESGIPIFAWRGETEEDFWWCIDRCVNAENWQPNMILDDGGDATHLMLKKYPTMFKLVKGIVEESVTGVHRLYQLSKAGKLTVPAMNVNDSVTKTKFDNLYSCKESILDSLKRSTDVMFGGKQVVVCGYGDVGKGCAQALKGQGCIVYITEIDPICALQASMDGFRVVKLNEVIRNVDIVVTATGNKNVVVREHMDKMKSGCIVCNMGHSNTEIDVNGLRTPDLTWEKVRSQVDHIIWPEGKYIILLAEGRLVNLSCSSIPSFAVSITSATQALALIELFNAPPGRYKSDVYLLPKKMDEYVASLHLPTFDAHLTELSDEQAKYMGLNKAGPFKPNYYRY</sequence>
<name>SAHH2_DROME</name>
<protein>
    <recommendedName>
        <fullName evidence="10">Adenosylhomocysteinase-like 1</fullName>
        <shortName evidence="6">dAhcyL1</shortName>
    </recommendedName>
    <alternativeName>
        <fullName evidence="7">Inactive S-adenosyl-L-homocysteine hydrolase</fullName>
    </alternativeName>
    <alternativeName>
        <fullName evidence="7">S-adenosylhomocysteine hydrolase-like protein 1</fullName>
    </alternativeName>
</protein>
<keyword id="KW-0520">NAD</keyword>
<keyword id="KW-0554">One-carbon metabolism</keyword>
<keyword id="KW-1185">Reference proteome</keyword>
<reference evidence="11" key="1">
    <citation type="journal article" date="2000" name="Science">
        <title>The genome sequence of Drosophila melanogaster.</title>
        <authorList>
            <person name="Adams M.D."/>
            <person name="Celniker S.E."/>
            <person name="Holt R.A."/>
            <person name="Evans C.A."/>
            <person name="Gocayne J.D."/>
            <person name="Amanatides P.G."/>
            <person name="Scherer S.E."/>
            <person name="Li P.W."/>
            <person name="Hoskins R.A."/>
            <person name="Galle R.F."/>
            <person name="George R.A."/>
            <person name="Lewis S.E."/>
            <person name="Richards S."/>
            <person name="Ashburner M."/>
            <person name="Henderson S.N."/>
            <person name="Sutton G.G."/>
            <person name="Wortman J.R."/>
            <person name="Yandell M.D."/>
            <person name="Zhang Q."/>
            <person name="Chen L.X."/>
            <person name="Brandon R.C."/>
            <person name="Rogers Y.-H.C."/>
            <person name="Blazej R.G."/>
            <person name="Champe M."/>
            <person name="Pfeiffer B.D."/>
            <person name="Wan K.H."/>
            <person name="Doyle C."/>
            <person name="Baxter E.G."/>
            <person name="Helt G."/>
            <person name="Nelson C.R."/>
            <person name="Miklos G.L.G."/>
            <person name="Abril J.F."/>
            <person name="Agbayani A."/>
            <person name="An H.-J."/>
            <person name="Andrews-Pfannkoch C."/>
            <person name="Baldwin D."/>
            <person name="Ballew R.M."/>
            <person name="Basu A."/>
            <person name="Baxendale J."/>
            <person name="Bayraktaroglu L."/>
            <person name="Beasley E.M."/>
            <person name="Beeson K.Y."/>
            <person name="Benos P.V."/>
            <person name="Berman B.P."/>
            <person name="Bhandari D."/>
            <person name="Bolshakov S."/>
            <person name="Borkova D."/>
            <person name="Botchan M.R."/>
            <person name="Bouck J."/>
            <person name="Brokstein P."/>
            <person name="Brottier P."/>
            <person name="Burtis K.C."/>
            <person name="Busam D.A."/>
            <person name="Butler H."/>
            <person name="Cadieu E."/>
            <person name="Center A."/>
            <person name="Chandra I."/>
            <person name="Cherry J.M."/>
            <person name="Cawley S."/>
            <person name="Dahlke C."/>
            <person name="Davenport L.B."/>
            <person name="Davies P."/>
            <person name="de Pablos B."/>
            <person name="Delcher A."/>
            <person name="Deng Z."/>
            <person name="Mays A.D."/>
            <person name="Dew I."/>
            <person name="Dietz S.M."/>
            <person name="Dodson K."/>
            <person name="Doup L.E."/>
            <person name="Downes M."/>
            <person name="Dugan-Rocha S."/>
            <person name="Dunkov B.C."/>
            <person name="Dunn P."/>
            <person name="Durbin K.J."/>
            <person name="Evangelista C.C."/>
            <person name="Ferraz C."/>
            <person name="Ferriera S."/>
            <person name="Fleischmann W."/>
            <person name="Fosler C."/>
            <person name="Gabrielian A.E."/>
            <person name="Garg N.S."/>
            <person name="Gelbart W.M."/>
            <person name="Glasser K."/>
            <person name="Glodek A."/>
            <person name="Gong F."/>
            <person name="Gorrell J.H."/>
            <person name="Gu Z."/>
            <person name="Guan P."/>
            <person name="Harris M."/>
            <person name="Harris N.L."/>
            <person name="Harvey D.A."/>
            <person name="Heiman T.J."/>
            <person name="Hernandez J.R."/>
            <person name="Houck J."/>
            <person name="Hostin D."/>
            <person name="Houston K.A."/>
            <person name="Howland T.J."/>
            <person name="Wei M.-H."/>
            <person name="Ibegwam C."/>
            <person name="Jalali M."/>
            <person name="Kalush F."/>
            <person name="Karpen G.H."/>
            <person name="Ke Z."/>
            <person name="Kennison J.A."/>
            <person name="Ketchum K.A."/>
            <person name="Kimmel B.E."/>
            <person name="Kodira C.D."/>
            <person name="Kraft C.L."/>
            <person name="Kravitz S."/>
            <person name="Kulp D."/>
            <person name="Lai Z."/>
            <person name="Lasko P."/>
            <person name="Lei Y."/>
            <person name="Levitsky A.A."/>
            <person name="Li J.H."/>
            <person name="Li Z."/>
            <person name="Liang Y."/>
            <person name="Lin X."/>
            <person name="Liu X."/>
            <person name="Mattei B."/>
            <person name="McIntosh T.C."/>
            <person name="McLeod M.P."/>
            <person name="McPherson D."/>
            <person name="Merkulov G."/>
            <person name="Milshina N.V."/>
            <person name="Mobarry C."/>
            <person name="Morris J."/>
            <person name="Moshrefi A."/>
            <person name="Mount S.M."/>
            <person name="Moy M."/>
            <person name="Murphy B."/>
            <person name="Murphy L."/>
            <person name="Muzny D.M."/>
            <person name="Nelson D.L."/>
            <person name="Nelson D.R."/>
            <person name="Nelson K.A."/>
            <person name="Nixon K."/>
            <person name="Nusskern D.R."/>
            <person name="Pacleb J.M."/>
            <person name="Palazzolo M."/>
            <person name="Pittman G.S."/>
            <person name="Pan S."/>
            <person name="Pollard J."/>
            <person name="Puri V."/>
            <person name="Reese M.G."/>
            <person name="Reinert K."/>
            <person name="Remington K."/>
            <person name="Saunders R.D.C."/>
            <person name="Scheeler F."/>
            <person name="Shen H."/>
            <person name="Shue B.C."/>
            <person name="Siden-Kiamos I."/>
            <person name="Simpson M."/>
            <person name="Skupski M.P."/>
            <person name="Smith T.J."/>
            <person name="Spier E."/>
            <person name="Spradling A.C."/>
            <person name="Stapleton M."/>
            <person name="Strong R."/>
            <person name="Sun E."/>
            <person name="Svirskas R."/>
            <person name="Tector C."/>
            <person name="Turner R."/>
            <person name="Venter E."/>
            <person name="Wang A.H."/>
            <person name="Wang X."/>
            <person name="Wang Z.-Y."/>
            <person name="Wassarman D.A."/>
            <person name="Weinstock G.M."/>
            <person name="Weissenbach J."/>
            <person name="Williams S.M."/>
            <person name="Woodage T."/>
            <person name="Worley K.C."/>
            <person name="Wu D."/>
            <person name="Yang S."/>
            <person name="Yao Q.A."/>
            <person name="Ye J."/>
            <person name="Yeh R.-F."/>
            <person name="Zaveri J.S."/>
            <person name="Zhan M."/>
            <person name="Zhang G."/>
            <person name="Zhao Q."/>
            <person name="Zheng L."/>
            <person name="Zheng X.H."/>
            <person name="Zhong F.N."/>
            <person name="Zhong W."/>
            <person name="Zhou X."/>
            <person name="Zhu S.C."/>
            <person name="Zhu X."/>
            <person name="Smith H.O."/>
            <person name="Gibbs R.A."/>
            <person name="Myers E.W."/>
            <person name="Rubin G.M."/>
            <person name="Venter J.C."/>
        </authorList>
    </citation>
    <scope>NUCLEOTIDE SEQUENCE [LARGE SCALE GENOMIC DNA]</scope>
    <source>
        <strain evidence="11">Berkeley</strain>
    </source>
</reference>
<reference evidence="11" key="2">
    <citation type="journal article" date="2002" name="Genome Biol.">
        <title>Annotation of the Drosophila melanogaster euchromatic genome: a systematic review.</title>
        <authorList>
            <person name="Misra S."/>
            <person name="Crosby M.A."/>
            <person name="Mungall C.J."/>
            <person name="Matthews B.B."/>
            <person name="Campbell K.S."/>
            <person name="Hradecky P."/>
            <person name="Huang Y."/>
            <person name="Kaminker J.S."/>
            <person name="Millburn G.H."/>
            <person name="Prochnik S.E."/>
            <person name="Smith C.D."/>
            <person name="Tupy J.L."/>
            <person name="Whitfield E.J."/>
            <person name="Bayraktaroglu L."/>
            <person name="Berman B.P."/>
            <person name="Bettencourt B.R."/>
            <person name="Celniker S.E."/>
            <person name="de Grey A.D.N.J."/>
            <person name="Drysdale R.A."/>
            <person name="Harris N.L."/>
            <person name="Richter J."/>
            <person name="Russo S."/>
            <person name="Schroeder A.J."/>
            <person name="Shu S.Q."/>
            <person name="Stapleton M."/>
            <person name="Yamada C."/>
            <person name="Ashburner M."/>
            <person name="Gelbart W.M."/>
            <person name="Rubin G.M."/>
            <person name="Lewis S.E."/>
        </authorList>
    </citation>
    <scope>GENOME REANNOTATION</scope>
    <source>
        <strain evidence="11">Berkeley</strain>
    </source>
</reference>
<reference evidence="9" key="3">
    <citation type="submission" date="2009-01" db="EMBL/GenBank/DDBJ databases">
        <authorList>
            <person name="Carlson J."/>
            <person name="Booth B."/>
            <person name="Frise E."/>
            <person name="Park S."/>
            <person name="Wan K."/>
            <person name="Yu C."/>
            <person name="Celniker S."/>
        </authorList>
    </citation>
    <scope>NUCLEOTIDE SEQUENCE [LARGE SCALE MRNA]</scope>
    <source>
        <strain evidence="9">Berkeley</strain>
    </source>
</reference>
<reference evidence="8" key="4">
    <citation type="submission" date="2003-08" db="EMBL/GenBank/DDBJ databases">
        <authorList>
            <person name="Stapleton M."/>
            <person name="Brokstein P."/>
            <person name="Hong L."/>
            <person name="Agbayani A."/>
            <person name="Carlson J."/>
            <person name="Champe M."/>
            <person name="Chavez C."/>
            <person name="Dorsett V."/>
            <person name="Dresnek D."/>
            <person name="Farfan D."/>
            <person name="Frise E."/>
            <person name="George R."/>
            <person name="Gonzalez M."/>
            <person name="Guarin H."/>
            <person name="Kronmiller B."/>
            <person name="Li P."/>
            <person name="Liao G."/>
            <person name="Miranda A."/>
            <person name="Mungall C.J."/>
            <person name="Nunoo J."/>
            <person name="Pacleb J."/>
            <person name="Paragas V."/>
            <person name="Park S."/>
            <person name="Patel S."/>
            <person name="Phouanenavong S."/>
            <person name="Wan K."/>
            <person name="Yu C."/>
            <person name="Lewis S.E."/>
            <person name="Rubin G.M."/>
            <person name="Celniker S."/>
        </authorList>
    </citation>
    <scope>NUCLEOTIDE SEQUENCE [LARGE SCALE MRNA]</scope>
    <source>
        <strain evidence="8">Berkeley</strain>
    </source>
</reference>
<reference evidence="7" key="5">
    <citation type="journal article" date="2016" name="Genes Dev.">
        <title>Tissue-specific down-regulation of S-adenosyl-homocysteine via suppression of dAhcyL1/dAhcyL2 extends health span and life span in Drosophila.</title>
        <authorList>
            <person name="Parkhitko A.A."/>
            <person name="Binari R."/>
            <person name="Zhang N."/>
            <person name="Asara J.M."/>
            <person name="Demontis F."/>
            <person name="Perrimon N."/>
        </authorList>
    </citation>
    <scope>FUNCTION</scope>
    <scope>INTERACTION WITH AHCY</scope>
    <scope>DISRUPTION PHENOTYPE</scope>
</reference>
<feature type="chain" id="PRO_0000446367" description="Adenosylhomocysteinase-like 1">
    <location>
        <begin position="1"/>
        <end position="521"/>
    </location>
</feature>
<feature type="region of interest" description="Disordered" evidence="4">
    <location>
        <begin position="1"/>
        <end position="92"/>
    </location>
</feature>
<feature type="compositionally biased region" description="Low complexity" evidence="4">
    <location>
        <begin position="54"/>
        <end position="73"/>
    </location>
</feature>
<feature type="binding site" evidence="1">
    <location>
        <position position="220"/>
    </location>
    <ligand>
        <name>substrate</name>
    </ligand>
</feature>
<feature type="binding site" evidence="1">
    <location>
        <position position="245"/>
    </location>
    <ligand>
        <name>substrate</name>
    </ligand>
</feature>
<feature type="binding site" evidence="1">
    <location>
        <begin position="246"/>
        <end position="248"/>
    </location>
    <ligand>
        <name>NAD(+)</name>
        <dbReference type="ChEBI" id="CHEBI:57540"/>
    </ligand>
</feature>
<feature type="binding site" evidence="1">
    <location>
        <position position="275"/>
    </location>
    <ligand>
        <name>substrate</name>
    </ligand>
</feature>
<feature type="binding site" evidence="1">
    <location>
        <position position="279"/>
    </location>
    <ligand>
        <name>substrate</name>
    </ligand>
</feature>
<feature type="binding site" evidence="1">
    <location>
        <begin position="311"/>
        <end position="316"/>
    </location>
    <ligand>
        <name>NAD(+)</name>
        <dbReference type="ChEBI" id="CHEBI:57540"/>
    </ligand>
</feature>
<feature type="binding site" evidence="1">
    <location>
        <position position="332"/>
    </location>
    <ligand>
        <name>NAD(+)</name>
        <dbReference type="ChEBI" id="CHEBI:57540"/>
    </ligand>
</feature>
<feature type="binding site" evidence="1">
    <location>
        <begin position="388"/>
        <end position="390"/>
    </location>
    <ligand>
        <name>NAD(+)</name>
        <dbReference type="ChEBI" id="CHEBI:57540"/>
    </ligand>
</feature>
<feature type="binding site" evidence="1">
    <location>
        <position position="435"/>
    </location>
    <ligand>
        <name>NAD(+)</name>
        <dbReference type="ChEBI" id="CHEBI:57540"/>
    </ligand>
</feature>
<feature type="binding site" evidence="1">
    <location>
        <begin position="515"/>
        <end position="519"/>
    </location>
    <ligand>
        <name>NAD(+)</name>
        <dbReference type="ChEBI" id="CHEBI:57540"/>
    </ligand>
</feature>
<feature type="binding site" evidence="1">
    <location>
        <position position="515"/>
    </location>
    <ligand>
        <name>NAD(+)</name>
        <dbReference type="ChEBI" id="CHEBI:57540"/>
    </ligand>
</feature>
<feature type="binding site" evidence="1">
    <location>
        <position position="519"/>
    </location>
    <ligand>
        <name>NAD(+)</name>
        <dbReference type="ChEBI" id="CHEBI:57540"/>
    </ligand>
</feature>
<feature type="sequence conflict" description="In Ref. 4; AAQ23595." evidence="7" ref="4">
    <original>Q</original>
    <variation>K</variation>
    <location>
        <position position="502"/>
    </location>
</feature>
<organism evidence="11">
    <name type="scientific">Drosophila melanogaster</name>
    <name type="common">Fruit fly</name>
    <dbReference type="NCBI Taxonomy" id="7227"/>
    <lineage>
        <taxon>Eukaryota</taxon>
        <taxon>Metazoa</taxon>
        <taxon>Ecdysozoa</taxon>
        <taxon>Arthropoda</taxon>
        <taxon>Hexapoda</taxon>
        <taxon>Insecta</taxon>
        <taxon>Pterygota</taxon>
        <taxon>Neoptera</taxon>
        <taxon>Endopterygota</taxon>
        <taxon>Diptera</taxon>
        <taxon>Brachycera</taxon>
        <taxon>Muscomorpha</taxon>
        <taxon>Ephydroidea</taxon>
        <taxon>Drosophilidae</taxon>
        <taxon>Drosophila</taxon>
        <taxon>Sophophora</taxon>
    </lineage>
</organism>
<dbReference type="EMBL" id="AE014296">
    <property type="protein sequence ID" value="AAF47685.1"/>
    <property type="molecule type" value="Genomic_DNA"/>
</dbReference>
<dbReference type="EMBL" id="BT057981">
    <property type="protein sequence ID" value="ACM16691.1"/>
    <property type="molecule type" value="mRNA"/>
</dbReference>
<dbReference type="EMBL" id="BT010277">
    <property type="protein sequence ID" value="AAQ23595.1"/>
    <property type="molecule type" value="mRNA"/>
</dbReference>
<dbReference type="RefSeq" id="NP_647746.1">
    <property type="nucleotide sequence ID" value="NM_139489.2"/>
</dbReference>
<dbReference type="SMR" id="Q9VZX9"/>
<dbReference type="FunCoup" id="Q9VZX9">
    <property type="interactions" value="887"/>
</dbReference>
<dbReference type="IntAct" id="Q9VZX9">
    <property type="interactions" value="50"/>
</dbReference>
<dbReference type="STRING" id="7227.FBpp0072886"/>
<dbReference type="PaxDb" id="7227-FBpp0072886"/>
<dbReference type="DNASU" id="38342"/>
<dbReference type="EnsemblMetazoa" id="FBtr0073016">
    <property type="protein sequence ID" value="FBpp0072886"/>
    <property type="gene ID" value="FBgn0035371"/>
</dbReference>
<dbReference type="GeneID" id="38342"/>
<dbReference type="KEGG" id="dme:Dmel_CG9977"/>
<dbReference type="UCSC" id="CG9977-RA">
    <property type="organism name" value="d. melanogaster"/>
</dbReference>
<dbReference type="AGR" id="FB:FBgn0035371"/>
<dbReference type="CTD" id="10768"/>
<dbReference type="FlyBase" id="FBgn0035371">
    <property type="gene designation" value="AhcyL1"/>
</dbReference>
<dbReference type="VEuPathDB" id="VectorBase:FBgn0035371"/>
<dbReference type="eggNOG" id="KOG1370">
    <property type="taxonomic scope" value="Eukaryota"/>
</dbReference>
<dbReference type="GeneTree" id="ENSGT00950000182981"/>
<dbReference type="HOGENOM" id="CLU_025194_2_1_1"/>
<dbReference type="InParanoid" id="Q9VZX9"/>
<dbReference type="OMA" id="QPTHLCE"/>
<dbReference type="OrthoDB" id="10007170at2759"/>
<dbReference type="PhylomeDB" id="Q9VZX9"/>
<dbReference type="Reactome" id="R-DME-425381">
    <property type="pathway name" value="Bicarbonate transporters"/>
</dbReference>
<dbReference type="Reactome" id="R-DME-5578775">
    <property type="pathway name" value="Ion homeostasis"/>
</dbReference>
<dbReference type="SignaLink" id="Q9VZX9"/>
<dbReference type="BioGRID-ORCS" id="38342">
    <property type="hits" value="0 hits in 3 CRISPR screens"/>
</dbReference>
<dbReference type="GenomeRNAi" id="38342"/>
<dbReference type="PRO" id="PR:Q9VZX9"/>
<dbReference type="Proteomes" id="UP000000803">
    <property type="component" value="Chromosome 3L"/>
</dbReference>
<dbReference type="Bgee" id="FBgn0035371">
    <property type="expression patterns" value="Expressed in male accessory gland secondary cell (Drosophila) in male reproductive gland and 244 other cell types or tissues"/>
</dbReference>
<dbReference type="GO" id="GO:0005829">
    <property type="term" value="C:cytosol"/>
    <property type="evidence" value="ECO:0000318"/>
    <property type="project" value="GO_Central"/>
</dbReference>
<dbReference type="GO" id="GO:0006730">
    <property type="term" value="P:one-carbon metabolic process"/>
    <property type="evidence" value="ECO:0007669"/>
    <property type="project" value="UniProtKB-KW"/>
</dbReference>
<dbReference type="GO" id="GO:0033353">
    <property type="term" value="P:S-adenosylmethionine cycle"/>
    <property type="evidence" value="ECO:0000315"/>
    <property type="project" value="UniProtKB"/>
</dbReference>
<dbReference type="CDD" id="cd00401">
    <property type="entry name" value="SAHH"/>
    <property type="match status" value="1"/>
</dbReference>
<dbReference type="FunFam" id="3.40.50.1480:FF:000002">
    <property type="entry name" value="Adenosylhomocysteinase"/>
    <property type="match status" value="1"/>
</dbReference>
<dbReference type="FunFam" id="3.40.50.1480:FF:000007">
    <property type="entry name" value="Adenosylhomocysteinase"/>
    <property type="match status" value="1"/>
</dbReference>
<dbReference type="FunFam" id="3.40.50.720:FF:000035">
    <property type="entry name" value="Adenosylhomocysteinase"/>
    <property type="match status" value="1"/>
</dbReference>
<dbReference type="FunFam" id="3.40.50.1480:FF:000009">
    <property type="entry name" value="Adenosylhomocysteinase like 2"/>
    <property type="match status" value="1"/>
</dbReference>
<dbReference type="Gene3D" id="3.40.50.1480">
    <property type="entry name" value="Adenosylhomocysteinase-like"/>
    <property type="match status" value="2"/>
</dbReference>
<dbReference type="Gene3D" id="3.40.50.720">
    <property type="entry name" value="NAD(P)-binding Rossmann-like Domain"/>
    <property type="match status" value="1"/>
</dbReference>
<dbReference type="InterPro" id="IPR042172">
    <property type="entry name" value="Adenosylhomocyst_ase-like_sf"/>
</dbReference>
<dbReference type="InterPro" id="IPR000043">
    <property type="entry name" value="Adenosylhomocysteinase-like"/>
</dbReference>
<dbReference type="InterPro" id="IPR015878">
    <property type="entry name" value="Ado_hCys_hydrolase_NAD-bd"/>
</dbReference>
<dbReference type="InterPro" id="IPR036291">
    <property type="entry name" value="NAD(P)-bd_dom_sf"/>
</dbReference>
<dbReference type="InterPro" id="IPR020082">
    <property type="entry name" value="S-Ado-L-homoCys_hydrolase_CS"/>
</dbReference>
<dbReference type="NCBIfam" id="TIGR00936">
    <property type="entry name" value="ahcY"/>
    <property type="match status" value="1"/>
</dbReference>
<dbReference type="NCBIfam" id="NF004005">
    <property type="entry name" value="PRK05476.2-3"/>
    <property type="match status" value="1"/>
</dbReference>
<dbReference type="PANTHER" id="PTHR23420">
    <property type="entry name" value="ADENOSYLHOMOCYSTEINASE"/>
    <property type="match status" value="1"/>
</dbReference>
<dbReference type="PANTHER" id="PTHR23420:SF0">
    <property type="entry name" value="ADENOSYLHOMOCYSTEINASE"/>
    <property type="match status" value="1"/>
</dbReference>
<dbReference type="Pfam" id="PF05221">
    <property type="entry name" value="AdoHcyase"/>
    <property type="match status" value="1"/>
</dbReference>
<dbReference type="Pfam" id="PF00670">
    <property type="entry name" value="AdoHcyase_NAD"/>
    <property type="match status" value="1"/>
</dbReference>
<dbReference type="PIRSF" id="PIRSF001109">
    <property type="entry name" value="Ad_hcy_hydrolase"/>
    <property type="match status" value="1"/>
</dbReference>
<dbReference type="SMART" id="SM00996">
    <property type="entry name" value="AdoHcyase"/>
    <property type="match status" value="1"/>
</dbReference>
<dbReference type="SMART" id="SM00997">
    <property type="entry name" value="AdoHcyase_NAD"/>
    <property type="match status" value="1"/>
</dbReference>
<dbReference type="SUPFAM" id="SSF52283">
    <property type="entry name" value="Formate/glycerate dehydrogenase catalytic domain-like"/>
    <property type="match status" value="1"/>
</dbReference>
<dbReference type="SUPFAM" id="SSF51735">
    <property type="entry name" value="NAD(P)-binding Rossmann-fold domains"/>
    <property type="match status" value="1"/>
</dbReference>
<dbReference type="PROSITE" id="PS00738">
    <property type="entry name" value="ADOHCYASE_1"/>
    <property type="match status" value="1"/>
</dbReference>
<dbReference type="PROSITE" id="PS00739">
    <property type="entry name" value="ADOHCYASE_2"/>
    <property type="match status" value="1"/>
</dbReference>